<keyword id="KW-0028">Amino-acid biosynthesis</keyword>
<keyword id="KW-0055">Arginine biosynthesis</keyword>
<keyword id="KW-0067">ATP-binding</keyword>
<keyword id="KW-0315">Glutamine amidotransferase</keyword>
<keyword id="KW-0436">Ligase</keyword>
<keyword id="KW-0547">Nucleotide-binding</keyword>
<keyword id="KW-0665">Pyrimidine biosynthesis</keyword>
<keyword id="KW-1185">Reference proteome</keyword>
<proteinExistence type="inferred from homology"/>
<name>CARA_XYLFT</name>
<gene>
    <name evidence="1" type="primary">carA</name>
    <name type="ordered locus">PD_0398</name>
</gene>
<evidence type="ECO:0000255" key="1">
    <source>
        <dbReference type="HAMAP-Rule" id="MF_01209"/>
    </source>
</evidence>
<dbReference type="EC" id="6.3.5.5" evidence="1"/>
<dbReference type="EMBL" id="AE009442">
    <property type="protein sequence ID" value="AAO28278.1"/>
    <property type="molecule type" value="Genomic_DNA"/>
</dbReference>
<dbReference type="RefSeq" id="WP_004089995.1">
    <property type="nucleotide sequence ID" value="NC_004556.1"/>
</dbReference>
<dbReference type="SMR" id="Q87EB9"/>
<dbReference type="KEGG" id="xft:PD_0398"/>
<dbReference type="HOGENOM" id="CLU_035901_2_1_6"/>
<dbReference type="UniPathway" id="UPA00068">
    <property type="reaction ID" value="UER00171"/>
</dbReference>
<dbReference type="UniPathway" id="UPA00070">
    <property type="reaction ID" value="UER00115"/>
</dbReference>
<dbReference type="Proteomes" id="UP000002516">
    <property type="component" value="Chromosome"/>
</dbReference>
<dbReference type="GO" id="GO:0005524">
    <property type="term" value="F:ATP binding"/>
    <property type="evidence" value="ECO:0007669"/>
    <property type="project" value="UniProtKB-UniRule"/>
</dbReference>
<dbReference type="GO" id="GO:0004088">
    <property type="term" value="F:carbamoyl-phosphate synthase (glutamine-hydrolyzing) activity"/>
    <property type="evidence" value="ECO:0007669"/>
    <property type="project" value="UniProtKB-UniRule"/>
</dbReference>
<dbReference type="GO" id="GO:0004359">
    <property type="term" value="F:glutaminase activity"/>
    <property type="evidence" value="ECO:0007669"/>
    <property type="project" value="RHEA"/>
</dbReference>
<dbReference type="GO" id="GO:0006207">
    <property type="term" value="P:'de novo' pyrimidine nucleobase biosynthetic process"/>
    <property type="evidence" value="ECO:0007669"/>
    <property type="project" value="InterPro"/>
</dbReference>
<dbReference type="GO" id="GO:0044205">
    <property type="term" value="P:'de novo' UMP biosynthetic process"/>
    <property type="evidence" value="ECO:0007669"/>
    <property type="project" value="UniProtKB-UniRule"/>
</dbReference>
<dbReference type="GO" id="GO:0006541">
    <property type="term" value="P:glutamine metabolic process"/>
    <property type="evidence" value="ECO:0007669"/>
    <property type="project" value="InterPro"/>
</dbReference>
<dbReference type="GO" id="GO:0006526">
    <property type="term" value="P:L-arginine biosynthetic process"/>
    <property type="evidence" value="ECO:0007669"/>
    <property type="project" value="UniProtKB-UniRule"/>
</dbReference>
<dbReference type="CDD" id="cd01744">
    <property type="entry name" value="GATase1_CPSase"/>
    <property type="match status" value="1"/>
</dbReference>
<dbReference type="FunFam" id="3.40.50.880:FF:000011">
    <property type="entry name" value="Carbamoyl-phosphate synthase small chain"/>
    <property type="match status" value="1"/>
</dbReference>
<dbReference type="FunFam" id="3.50.30.20:FF:000001">
    <property type="entry name" value="Carbamoyl-phosphate synthase small chain"/>
    <property type="match status" value="1"/>
</dbReference>
<dbReference type="Gene3D" id="3.40.50.880">
    <property type="match status" value="1"/>
</dbReference>
<dbReference type="Gene3D" id="3.50.30.20">
    <property type="entry name" value="Carbamoyl-phosphate synthase small subunit, N-terminal domain"/>
    <property type="match status" value="1"/>
</dbReference>
<dbReference type="HAMAP" id="MF_01209">
    <property type="entry name" value="CPSase_S_chain"/>
    <property type="match status" value="1"/>
</dbReference>
<dbReference type="InterPro" id="IPR050472">
    <property type="entry name" value="Anth_synth/Amidotransfase"/>
</dbReference>
<dbReference type="InterPro" id="IPR006274">
    <property type="entry name" value="CarbamoylP_synth_ssu"/>
</dbReference>
<dbReference type="InterPro" id="IPR002474">
    <property type="entry name" value="CarbamoylP_synth_ssu_N"/>
</dbReference>
<dbReference type="InterPro" id="IPR036480">
    <property type="entry name" value="CarbP_synth_ssu_N_sf"/>
</dbReference>
<dbReference type="InterPro" id="IPR029062">
    <property type="entry name" value="Class_I_gatase-like"/>
</dbReference>
<dbReference type="InterPro" id="IPR035686">
    <property type="entry name" value="CPSase_GATase1"/>
</dbReference>
<dbReference type="InterPro" id="IPR017926">
    <property type="entry name" value="GATASE"/>
</dbReference>
<dbReference type="NCBIfam" id="TIGR01368">
    <property type="entry name" value="CPSaseIIsmall"/>
    <property type="match status" value="1"/>
</dbReference>
<dbReference type="NCBIfam" id="NF009475">
    <property type="entry name" value="PRK12838.1"/>
    <property type="match status" value="1"/>
</dbReference>
<dbReference type="PANTHER" id="PTHR43418:SF7">
    <property type="entry name" value="CARBAMOYL-PHOSPHATE SYNTHASE SMALL CHAIN"/>
    <property type="match status" value="1"/>
</dbReference>
<dbReference type="PANTHER" id="PTHR43418">
    <property type="entry name" value="MULTIFUNCTIONAL TRYPTOPHAN BIOSYNTHESIS PROTEIN-RELATED"/>
    <property type="match status" value="1"/>
</dbReference>
<dbReference type="Pfam" id="PF00988">
    <property type="entry name" value="CPSase_sm_chain"/>
    <property type="match status" value="1"/>
</dbReference>
<dbReference type="Pfam" id="PF00117">
    <property type="entry name" value="GATase"/>
    <property type="match status" value="1"/>
</dbReference>
<dbReference type="PRINTS" id="PR00097">
    <property type="entry name" value="ANTSNTHASEII"/>
</dbReference>
<dbReference type="PRINTS" id="PR00099">
    <property type="entry name" value="CPSGATASE"/>
</dbReference>
<dbReference type="PRINTS" id="PR00096">
    <property type="entry name" value="GATASE"/>
</dbReference>
<dbReference type="SMART" id="SM01097">
    <property type="entry name" value="CPSase_sm_chain"/>
    <property type="match status" value="1"/>
</dbReference>
<dbReference type="SUPFAM" id="SSF52021">
    <property type="entry name" value="Carbamoyl phosphate synthetase, small subunit N-terminal domain"/>
    <property type="match status" value="1"/>
</dbReference>
<dbReference type="SUPFAM" id="SSF52317">
    <property type="entry name" value="Class I glutamine amidotransferase-like"/>
    <property type="match status" value="1"/>
</dbReference>
<dbReference type="PROSITE" id="PS51273">
    <property type="entry name" value="GATASE_TYPE_1"/>
    <property type="match status" value="1"/>
</dbReference>
<accession>Q87EB9</accession>
<reference key="1">
    <citation type="journal article" date="2003" name="J. Bacteriol.">
        <title>Comparative analyses of the complete genome sequences of Pierce's disease and citrus variegated chlorosis strains of Xylella fastidiosa.</title>
        <authorList>
            <person name="Van Sluys M.A."/>
            <person name="de Oliveira M.C."/>
            <person name="Monteiro-Vitorello C.B."/>
            <person name="Miyaki C.Y."/>
            <person name="Furlan L.R."/>
            <person name="Camargo L.E.A."/>
            <person name="da Silva A.C.R."/>
            <person name="Moon D.H."/>
            <person name="Takita M.A."/>
            <person name="Lemos E.G.M."/>
            <person name="Machado M.A."/>
            <person name="Ferro M.I.T."/>
            <person name="da Silva F.R."/>
            <person name="Goldman M.H.S."/>
            <person name="Goldman G.H."/>
            <person name="Lemos M.V.F."/>
            <person name="El-Dorry H."/>
            <person name="Tsai S.M."/>
            <person name="Carrer H."/>
            <person name="Carraro D.M."/>
            <person name="de Oliveira R.C."/>
            <person name="Nunes L.R."/>
            <person name="Siqueira W.J."/>
            <person name="Coutinho L.L."/>
            <person name="Kimura E.T."/>
            <person name="Ferro E.S."/>
            <person name="Harakava R."/>
            <person name="Kuramae E.E."/>
            <person name="Marino C.L."/>
            <person name="Giglioti E."/>
            <person name="Abreu I.L."/>
            <person name="Alves L.M.C."/>
            <person name="do Amaral A.M."/>
            <person name="Baia G.S."/>
            <person name="Blanco S.R."/>
            <person name="Brito M.S."/>
            <person name="Cannavan F.S."/>
            <person name="Celestino A.V."/>
            <person name="da Cunha A.F."/>
            <person name="Fenille R.C."/>
            <person name="Ferro J.A."/>
            <person name="Formighieri E.F."/>
            <person name="Kishi L.T."/>
            <person name="Leoni S.G."/>
            <person name="Oliveira A.R."/>
            <person name="Rosa V.E. Jr."/>
            <person name="Sassaki F.T."/>
            <person name="Sena J.A.D."/>
            <person name="de Souza A.A."/>
            <person name="Truffi D."/>
            <person name="Tsukumo F."/>
            <person name="Yanai G.M."/>
            <person name="Zaros L.G."/>
            <person name="Civerolo E.L."/>
            <person name="Simpson A.J.G."/>
            <person name="Almeida N.F. Jr."/>
            <person name="Setubal J.C."/>
            <person name="Kitajima J.P."/>
        </authorList>
    </citation>
    <scope>NUCLEOTIDE SEQUENCE [LARGE SCALE GENOMIC DNA]</scope>
    <source>
        <strain>Temecula1 / ATCC 700964</strain>
    </source>
</reference>
<feature type="chain" id="PRO_0000112351" description="Carbamoyl phosphate synthase small chain">
    <location>
        <begin position="1"/>
        <end position="374"/>
    </location>
</feature>
<feature type="domain" description="Glutamine amidotransferase type-1" evidence="1">
    <location>
        <begin position="189"/>
        <end position="374"/>
    </location>
</feature>
<feature type="region of interest" description="CPSase" evidence="1">
    <location>
        <begin position="1"/>
        <end position="186"/>
    </location>
</feature>
<feature type="active site" description="Nucleophile" evidence="1">
    <location>
        <position position="265"/>
    </location>
</feature>
<feature type="active site" evidence="1">
    <location>
        <position position="349"/>
    </location>
</feature>
<feature type="active site" evidence="1">
    <location>
        <position position="351"/>
    </location>
</feature>
<feature type="binding site" evidence="1">
    <location>
        <position position="47"/>
    </location>
    <ligand>
        <name>L-glutamine</name>
        <dbReference type="ChEBI" id="CHEBI:58359"/>
    </ligand>
</feature>
<feature type="binding site" evidence="1">
    <location>
        <position position="237"/>
    </location>
    <ligand>
        <name>L-glutamine</name>
        <dbReference type="ChEBI" id="CHEBI:58359"/>
    </ligand>
</feature>
<feature type="binding site" evidence="1">
    <location>
        <position position="239"/>
    </location>
    <ligand>
        <name>L-glutamine</name>
        <dbReference type="ChEBI" id="CHEBI:58359"/>
    </ligand>
</feature>
<feature type="binding site" evidence="1">
    <location>
        <position position="266"/>
    </location>
    <ligand>
        <name>L-glutamine</name>
        <dbReference type="ChEBI" id="CHEBI:58359"/>
    </ligand>
</feature>
<feature type="binding site" evidence="1">
    <location>
        <position position="269"/>
    </location>
    <ligand>
        <name>L-glutamine</name>
        <dbReference type="ChEBI" id="CHEBI:58359"/>
    </ligand>
</feature>
<feature type="binding site" evidence="1">
    <location>
        <position position="307"/>
    </location>
    <ligand>
        <name>L-glutamine</name>
        <dbReference type="ChEBI" id="CHEBI:58359"/>
    </ligand>
</feature>
<feature type="binding site" evidence="1">
    <location>
        <position position="309"/>
    </location>
    <ligand>
        <name>L-glutamine</name>
        <dbReference type="ChEBI" id="CHEBI:58359"/>
    </ligand>
</feature>
<feature type="binding site" evidence="1">
    <location>
        <position position="310"/>
    </location>
    <ligand>
        <name>L-glutamine</name>
        <dbReference type="ChEBI" id="CHEBI:58359"/>
    </ligand>
</feature>
<sequence>MTEHAILVLEDGTVFEGDAVGANGLSVGEVVFNTALTGYQEILTDPSYAYQLVTLTYPHIGNTGCTDQDDEANKVWAAGLIVRDVPRRPSNWRSQISLSDWLAARGVVAIAGIDTRKLTRILREKGAQHGALMAGEIDVGKAQDAAHQFAGIKGMDLAKVVSTKQGYSWYEGQLDLDRNECKRAAPQYKVVAYDYGVKLNILRMLAERGCDLTVVPAQTPADEVLALCPDGVFLSNGPGDPEPCDYAVAAIKTFIMRRVPIFGICLGHQLLAQAVGARVVKMSHGHHGANHPVQDLRSGRVMITSQNHGFAVDEATLPNNVRVTHRSLFDGTNQGIELLDVPAFSFQGHPEASPGPHDVDVLFDRFITMMAAQS</sequence>
<protein>
    <recommendedName>
        <fullName evidence="1">Carbamoyl phosphate synthase small chain</fullName>
        <ecNumber evidence="1">6.3.5.5</ecNumber>
    </recommendedName>
    <alternativeName>
        <fullName evidence="1">Carbamoyl phosphate synthetase glutamine chain</fullName>
    </alternativeName>
</protein>
<comment type="function">
    <text evidence="1">Small subunit of the glutamine-dependent carbamoyl phosphate synthetase (CPSase). CPSase catalyzes the formation of carbamoyl phosphate from the ammonia moiety of glutamine, carbonate, and phosphate donated by ATP, constituting the first step of 2 biosynthetic pathways, one leading to arginine and/or urea and the other to pyrimidine nucleotides. The small subunit (glutamine amidotransferase) binds and cleaves glutamine to supply the large subunit with the substrate ammonia.</text>
</comment>
<comment type="catalytic activity">
    <reaction evidence="1">
        <text>hydrogencarbonate + L-glutamine + 2 ATP + H2O = carbamoyl phosphate + L-glutamate + 2 ADP + phosphate + 2 H(+)</text>
        <dbReference type="Rhea" id="RHEA:18633"/>
        <dbReference type="ChEBI" id="CHEBI:15377"/>
        <dbReference type="ChEBI" id="CHEBI:15378"/>
        <dbReference type="ChEBI" id="CHEBI:17544"/>
        <dbReference type="ChEBI" id="CHEBI:29985"/>
        <dbReference type="ChEBI" id="CHEBI:30616"/>
        <dbReference type="ChEBI" id="CHEBI:43474"/>
        <dbReference type="ChEBI" id="CHEBI:58228"/>
        <dbReference type="ChEBI" id="CHEBI:58359"/>
        <dbReference type="ChEBI" id="CHEBI:456216"/>
        <dbReference type="EC" id="6.3.5.5"/>
    </reaction>
</comment>
<comment type="catalytic activity">
    <molecule>Carbamoyl phosphate synthase small chain</molecule>
    <reaction evidence="1">
        <text>L-glutamine + H2O = L-glutamate + NH4(+)</text>
        <dbReference type="Rhea" id="RHEA:15889"/>
        <dbReference type="ChEBI" id="CHEBI:15377"/>
        <dbReference type="ChEBI" id="CHEBI:28938"/>
        <dbReference type="ChEBI" id="CHEBI:29985"/>
        <dbReference type="ChEBI" id="CHEBI:58359"/>
    </reaction>
</comment>
<comment type="pathway">
    <text evidence="1">Amino-acid biosynthesis; L-arginine biosynthesis; carbamoyl phosphate from bicarbonate: step 1/1.</text>
</comment>
<comment type="pathway">
    <text evidence="1">Pyrimidine metabolism; UMP biosynthesis via de novo pathway; (S)-dihydroorotate from bicarbonate: step 1/3.</text>
</comment>
<comment type="subunit">
    <text evidence="1">Composed of two chains; the small (or glutamine) chain promotes the hydrolysis of glutamine to ammonia, which is used by the large (or ammonia) chain to synthesize carbamoyl phosphate. Tetramer of heterodimers (alpha,beta)4.</text>
</comment>
<comment type="similarity">
    <text evidence="1">Belongs to the CarA family.</text>
</comment>
<organism>
    <name type="scientific">Xylella fastidiosa (strain Temecula1 / ATCC 700964)</name>
    <dbReference type="NCBI Taxonomy" id="183190"/>
    <lineage>
        <taxon>Bacteria</taxon>
        <taxon>Pseudomonadati</taxon>
        <taxon>Pseudomonadota</taxon>
        <taxon>Gammaproteobacteria</taxon>
        <taxon>Lysobacterales</taxon>
        <taxon>Lysobacteraceae</taxon>
        <taxon>Xylella</taxon>
    </lineage>
</organism>